<reference key="1">
    <citation type="journal article" date="2000" name="Nature">
        <title>The genome sequence of the food-borne pathogen Campylobacter jejuni reveals hypervariable sequences.</title>
        <authorList>
            <person name="Parkhill J."/>
            <person name="Wren B.W."/>
            <person name="Mungall K.L."/>
            <person name="Ketley J.M."/>
            <person name="Churcher C.M."/>
            <person name="Basham D."/>
            <person name="Chillingworth T."/>
            <person name="Davies R.M."/>
            <person name="Feltwell T."/>
            <person name="Holroyd S."/>
            <person name="Jagels K."/>
            <person name="Karlyshev A.V."/>
            <person name="Moule S."/>
            <person name="Pallen M.J."/>
            <person name="Penn C.W."/>
            <person name="Quail M.A."/>
            <person name="Rajandream M.A."/>
            <person name="Rutherford K.M."/>
            <person name="van Vliet A.H.M."/>
            <person name="Whitehead S."/>
            <person name="Barrell B.G."/>
        </authorList>
    </citation>
    <scope>NUCLEOTIDE SEQUENCE [LARGE SCALE GENOMIC DNA]</scope>
    <source>
        <strain>ATCC 700819 / NCTC 11168</strain>
    </source>
</reference>
<evidence type="ECO:0000255" key="1">
    <source>
        <dbReference type="HAMAP-Rule" id="MF_00818"/>
    </source>
</evidence>
<dbReference type="EC" id="1.7.1.13" evidence="1"/>
<dbReference type="EMBL" id="AL111168">
    <property type="protein sequence ID" value="CAL35818.1"/>
    <property type="molecule type" value="Genomic_DNA"/>
</dbReference>
<dbReference type="PIR" id="H81270">
    <property type="entry name" value="H81270"/>
</dbReference>
<dbReference type="RefSeq" id="WP_002834281.1">
    <property type="nucleotide sequence ID" value="NZ_SZUC01000002.1"/>
</dbReference>
<dbReference type="RefSeq" id="YP_002345090.1">
    <property type="nucleotide sequence ID" value="NC_002163.1"/>
</dbReference>
<dbReference type="SMR" id="Q9PLV4"/>
<dbReference type="IntAct" id="Q9PLV4">
    <property type="interactions" value="16"/>
</dbReference>
<dbReference type="STRING" id="192222.Cj1724c"/>
<dbReference type="PaxDb" id="192222-Cj1724c"/>
<dbReference type="DNASU" id="905900"/>
<dbReference type="EnsemblBacteria" id="CAL35818">
    <property type="protein sequence ID" value="CAL35818"/>
    <property type="gene ID" value="Cj1724c"/>
</dbReference>
<dbReference type="GeneID" id="905900"/>
<dbReference type="KEGG" id="cje:Cj1724c"/>
<dbReference type="PATRIC" id="fig|192222.6.peg.1697"/>
<dbReference type="eggNOG" id="COG0780">
    <property type="taxonomic scope" value="Bacteria"/>
</dbReference>
<dbReference type="HOGENOM" id="CLU_102489_1_1_7"/>
<dbReference type="OrthoDB" id="9789995at2"/>
<dbReference type="UniPathway" id="UPA00392"/>
<dbReference type="Proteomes" id="UP000000799">
    <property type="component" value="Chromosome"/>
</dbReference>
<dbReference type="GO" id="GO:0005737">
    <property type="term" value="C:cytoplasm"/>
    <property type="evidence" value="ECO:0007669"/>
    <property type="project" value="UniProtKB-SubCell"/>
</dbReference>
<dbReference type="GO" id="GO:0033739">
    <property type="term" value="F:preQ1 synthase activity"/>
    <property type="evidence" value="ECO:0007669"/>
    <property type="project" value="UniProtKB-UniRule"/>
</dbReference>
<dbReference type="GO" id="GO:0008616">
    <property type="term" value="P:queuosine biosynthetic process"/>
    <property type="evidence" value="ECO:0007669"/>
    <property type="project" value="UniProtKB-UniRule"/>
</dbReference>
<dbReference type="GO" id="GO:0006400">
    <property type="term" value="P:tRNA modification"/>
    <property type="evidence" value="ECO:0007669"/>
    <property type="project" value="UniProtKB-UniRule"/>
</dbReference>
<dbReference type="Gene3D" id="3.30.1130.10">
    <property type="match status" value="1"/>
</dbReference>
<dbReference type="HAMAP" id="MF_00818">
    <property type="entry name" value="QueF_type1"/>
    <property type="match status" value="1"/>
</dbReference>
<dbReference type="InterPro" id="IPR043133">
    <property type="entry name" value="GTP-CH-I_C/QueF"/>
</dbReference>
<dbReference type="InterPro" id="IPR050084">
    <property type="entry name" value="NADPH_dep_7-cyano-7-deazaG_red"/>
</dbReference>
<dbReference type="InterPro" id="IPR029500">
    <property type="entry name" value="QueF"/>
</dbReference>
<dbReference type="InterPro" id="IPR016856">
    <property type="entry name" value="QueF_type1"/>
</dbReference>
<dbReference type="NCBIfam" id="TIGR03139">
    <property type="entry name" value="QueF-II"/>
    <property type="match status" value="1"/>
</dbReference>
<dbReference type="PANTHER" id="PTHR34354">
    <property type="entry name" value="NADPH-DEPENDENT 7-CYANO-7-DEAZAGUANINE REDUCTASE"/>
    <property type="match status" value="1"/>
</dbReference>
<dbReference type="PANTHER" id="PTHR34354:SF1">
    <property type="entry name" value="NADPH-DEPENDENT 7-CYANO-7-DEAZAGUANINE REDUCTASE"/>
    <property type="match status" value="1"/>
</dbReference>
<dbReference type="Pfam" id="PF14489">
    <property type="entry name" value="QueF"/>
    <property type="match status" value="1"/>
</dbReference>
<dbReference type="PIRSF" id="PIRSF027377">
    <property type="entry name" value="Nitrile_oxidored_QueF"/>
    <property type="match status" value="1"/>
</dbReference>
<dbReference type="SUPFAM" id="SSF55620">
    <property type="entry name" value="Tetrahydrobiopterin biosynthesis enzymes-like"/>
    <property type="match status" value="1"/>
</dbReference>
<organism>
    <name type="scientific">Campylobacter jejuni subsp. jejuni serotype O:2 (strain ATCC 700819 / NCTC 11168)</name>
    <dbReference type="NCBI Taxonomy" id="192222"/>
    <lineage>
        <taxon>Bacteria</taxon>
        <taxon>Pseudomonadati</taxon>
        <taxon>Campylobacterota</taxon>
        <taxon>Epsilonproteobacteria</taxon>
        <taxon>Campylobacterales</taxon>
        <taxon>Campylobacteraceae</taxon>
        <taxon>Campylobacter</taxon>
    </lineage>
</organism>
<sequence length="127" mass="15040">MRYGEKEIKEFDVENMEIWPNDAKNDYIIKITLPEFMCCCPRSGYPDFATIYLEYMPDKFVVELKAIKLYINTFMYRNVSHEASINEIYNTLKDKLKPKWIKVVGDFNPRGNVHTVIECRSDMVVPK</sequence>
<protein>
    <recommendedName>
        <fullName evidence="1">NADPH-dependent 7-cyano-7-deazaguanine reductase</fullName>
        <ecNumber evidence="1">1.7.1.13</ecNumber>
    </recommendedName>
    <alternativeName>
        <fullName evidence="1">7-cyano-7-carbaguanine reductase</fullName>
    </alternativeName>
    <alternativeName>
        <fullName evidence="1">NADPH-dependent nitrile oxidoreductase</fullName>
    </alternativeName>
    <alternativeName>
        <fullName evidence="1">PreQ(0) reductase</fullName>
    </alternativeName>
</protein>
<comment type="function">
    <text evidence="1">Catalyzes the NADPH-dependent reduction of 7-cyano-7-deazaguanine (preQ0) to 7-aminomethyl-7-deazaguanine (preQ1).</text>
</comment>
<comment type="catalytic activity">
    <reaction evidence="1">
        <text>7-aminomethyl-7-carbaguanine + 2 NADP(+) = 7-cyano-7-deazaguanine + 2 NADPH + 3 H(+)</text>
        <dbReference type="Rhea" id="RHEA:13409"/>
        <dbReference type="ChEBI" id="CHEBI:15378"/>
        <dbReference type="ChEBI" id="CHEBI:45075"/>
        <dbReference type="ChEBI" id="CHEBI:57783"/>
        <dbReference type="ChEBI" id="CHEBI:58349"/>
        <dbReference type="ChEBI" id="CHEBI:58703"/>
        <dbReference type="EC" id="1.7.1.13"/>
    </reaction>
</comment>
<comment type="pathway">
    <text evidence="1">tRNA modification; tRNA-queuosine biosynthesis.</text>
</comment>
<comment type="subcellular location">
    <subcellularLocation>
        <location evidence="1">Cytoplasm</location>
    </subcellularLocation>
</comment>
<comment type="similarity">
    <text evidence="1">Belongs to the GTP cyclohydrolase I family. QueF type 1 subfamily.</text>
</comment>
<name>QUEF_CAMJE</name>
<feature type="chain" id="PRO_0000162967" description="NADPH-dependent 7-cyano-7-deazaguanine reductase">
    <location>
        <begin position="1"/>
        <end position="127"/>
    </location>
</feature>
<feature type="active site" description="Thioimide intermediate" evidence="1">
    <location>
        <position position="40"/>
    </location>
</feature>
<feature type="active site" description="Proton donor" evidence="1">
    <location>
        <position position="47"/>
    </location>
</feature>
<feature type="binding site" evidence="1">
    <location>
        <begin position="62"/>
        <end position="64"/>
    </location>
    <ligand>
        <name>substrate</name>
    </ligand>
</feature>
<feature type="binding site" evidence="1">
    <location>
        <begin position="81"/>
        <end position="82"/>
    </location>
    <ligand>
        <name>substrate</name>
    </ligand>
</feature>
<proteinExistence type="inferred from homology"/>
<accession>Q9PLV4</accession>
<accession>Q0P7Q7</accession>
<gene>
    <name evidence="1" type="primary">queF</name>
    <name type="ordered locus">Cj1724c</name>
</gene>
<keyword id="KW-0963">Cytoplasm</keyword>
<keyword id="KW-0521">NADP</keyword>
<keyword id="KW-0560">Oxidoreductase</keyword>
<keyword id="KW-0671">Queuosine biosynthesis</keyword>
<keyword id="KW-1185">Reference proteome</keyword>